<sequence>MALWMRLLPLLALLALWGPDPAQAFVNQHLCGSHLVEALYLVCGERGFFYTPKTRREAEDLQVGQVELGGGPGAGSLQPLALEGSLQKRGIVEQCCTSICSLYQLENYCN</sequence>
<proteinExistence type="inferred from homology"/>
<protein>
    <recommendedName>
        <fullName>Insulin</fullName>
    </recommendedName>
    <component>
        <recommendedName>
            <fullName>Insulin B chain</fullName>
        </recommendedName>
    </component>
    <component>
        <recommendedName>
            <fullName>Insulin A chain</fullName>
        </recommendedName>
    </component>
</protein>
<gene>
    <name type="primary">INS</name>
</gene>
<reference key="1">
    <citation type="journal article" date="2003" name="Genome Res.">
        <title>Global haplotype diversity in the human insulin gene region.</title>
        <authorList>
            <person name="Stead J.D.H."/>
            <person name="Hurles M.E."/>
            <person name="Jeffreys A.J."/>
        </authorList>
    </citation>
    <scope>NUCLEOTIDE SEQUENCE [GENOMIC DNA]</scope>
</reference>
<feature type="signal peptide" evidence="1">
    <location>
        <begin position="1"/>
        <end position="24"/>
    </location>
</feature>
<feature type="peptide" id="PRO_0000015884" description="Insulin B chain">
    <location>
        <begin position="25"/>
        <end position="54"/>
    </location>
</feature>
<feature type="propeptide" id="PRO_0000015885" description="C peptide">
    <location>
        <begin position="57"/>
        <end position="87"/>
    </location>
</feature>
<feature type="peptide" id="PRO_0000015886" description="Insulin A chain">
    <location>
        <begin position="90"/>
        <end position="110"/>
    </location>
</feature>
<feature type="disulfide bond" description="Interchain (between B and A chains)" evidence="2">
    <location>
        <begin position="31"/>
        <end position="96"/>
    </location>
</feature>
<feature type="disulfide bond" description="Interchain (between B and A chains)" evidence="2">
    <location>
        <begin position="43"/>
        <end position="109"/>
    </location>
</feature>
<feature type="disulfide bond" evidence="2">
    <location>
        <begin position="95"/>
        <end position="100"/>
    </location>
</feature>
<name>INS_PONPY</name>
<organism>
    <name type="scientific">Pongo pygmaeus</name>
    <name type="common">Bornean orangutan</name>
    <dbReference type="NCBI Taxonomy" id="9600"/>
    <lineage>
        <taxon>Eukaryota</taxon>
        <taxon>Metazoa</taxon>
        <taxon>Chordata</taxon>
        <taxon>Craniata</taxon>
        <taxon>Vertebrata</taxon>
        <taxon>Euteleostomi</taxon>
        <taxon>Mammalia</taxon>
        <taxon>Eutheria</taxon>
        <taxon>Euarchontoglires</taxon>
        <taxon>Primates</taxon>
        <taxon>Haplorrhini</taxon>
        <taxon>Catarrhini</taxon>
        <taxon>Hominidae</taxon>
        <taxon>Pongo</taxon>
    </lineage>
</organism>
<comment type="function">
    <text>Insulin decreases blood glucose concentration. It increases cell permeability to monosaccharides, amino acids and fatty acids. It accelerates glycolysis, the pentose phosphate cycle, and glycogen synthesis in liver.</text>
</comment>
<comment type="subunit">
    <text evidence="2">Heterodimer of a B chain and an A chain linked by two disulfide bonds.</text>
</comment>
<comment type="subcellular location">
    <subcellularLocation>
        <location>Secreted</location>
    </subcellularLocation>
</comment>
<comment type="similarity">
    <text evidence="3">Belongs to the insulin family.</text>
</comment>
<accession>Q8HXV2</accession>
<evidence type="ECO:0000250" key="1"/>
<evidence type="ECO:0000250" key="2">
    <source>
        <dbReference type="UniProtKB" id="P01308"/>
    </source>
</evidence>
<evidence type="ECO:0000305" key="3"/>
<keyword id="KW-0119">Carbohydrate metabolism</keyword>
<keyword id="KW-0165">Cleavage on pair of basic residues</keyword>
<keyword id="KW-1015">Disulfide bond</keyword>
<keyword id="KW-0313">Glucose metabolism</keyword>
<keyword id="KW-0372">Hormone</keyword>
<keyword id="KW-0964">Secreted</keyword>
<keyword id="KW-0732">Signal</keyword>
<dbReference type="EMBL" id="AY137503">
    <property type="protein sequence ID" value="AAN06937.1"/>
    <property type="molecule type" value="Genomic_DNA"/>
</dbReference>
<dbReference type="RefSeq" id="XP_054295337.1">
    <property type="nucleotide sequence ID" value="XM_054439362.2"/>
</dbReference>
<dbReference type="BMRB" id="Q8HXV2"/>
<dbReference type="SMR" id="Q8HXV2"/>
<dbReference type="GeneID" id="129007934"/>
<dbReference type="GO" id="GO:0005615">
    <property type="term" value="C:extracellular space"/>
    <property type="evidence" value="ECO:0007669"/>
    <property type="project" value="TreeGrafter"/>
</dbReference>
<dbReference type="GO" id="GO:0005179">
    <property type="term" value="F:hormone activity"/>
    <property type="evidence" value="ECO:0007669"/>
    <property type="project" value="UniProtKB-KW"/>
</dbReference>
<dbReference type="GO" id="GO:1901701">
    <property type="term" value="P:cellular response to oxygen-containing compound"/>
    <property type="evidence" value="ECO:0007669"/>
    <property type="project" value="UniProtKB-ARBA"/>
</dbReference>
<dbReference type="GO" id="GO:0042593">
    <property type="term" value="P:glucose homeostasis"/>
    <property type="evidence" value="ECO:0007669"/>
    <property type="project" value="TreeGrafter"/>
</dbReference>
<dbReference type="GO" id="GO:0006006">
    <property type="term" value="P:glucose metabolic process"/>
    <property type="evidence" value="ECO:0007669"/>
    <property type="project" value="UniProtKB-KW"/>
</dbReference>
<dbReference type="GO" id="GO:0050714">
    <property type="term" value="P:positive regulation of protein secretion"/>
    <property type="evidence" value="ECO:0007669"/>
    <property type="project" value="TreeGrafter"/>
</dbReference>
<dbReference type="CDD" id="cd04367">
    <property type="entry name" value="IlGF_insulin_like"/>
    <property type="match status" value="1"/>
</dbReference>
<dbReference type="FunFam" id="1.10.100.10:FF:000003">
    <property type="entry name" value="Insulin"/>
    <property type="match status" value="1"/>
</dbReference>
<dbReference type="Gene3D" id="1.10.100.10">
    <property type="entry name" value="Insulin-like"/>
    <property type="match status" value="1"/>
</dbReference>
<dbReference type="InterPro" id="IPR004825">
    <property type="entry name" value="Insulin"/>
</dbReference>
<dbReference type="InterPro" id="IPR016179">
    <property type="entry name" value="Insulin-like"/>
</dbReference>
<dbReference type="InterPro" id="IPR036438">
    <property type="entry name" value="Insulin-like_sf"/>
</dbReference>
<dbReference type="InterPro" id="IPR022353">
    <property type="entry name" value="Insulin_CS"/>
</dbReference>
<dbReference type="InterPro" id="IPR022352">
    <property type="entry name" value="Insulin_family"/>
</dbReference>
<dbReference type="PANTHER" id="PTHR11454:SF9">
    <property type="entry name" value="INSULIN"/>
    <property type="match status" value="1"/>
</dbReference>
<dbReference type="PANTHER" id="PTHR11454">
    <property type="entry name" value="INSULIN/INSULIN GROWTH FACTOR"/>
    <property type="match status" value="1"/>
</dbReference>
<dbReference type="Pfam" id="PF00049">
    <property type="entry name" value="Insulin"/>
    <property type="match status" value="1"/>
</dbReference>
<dbReference type="PRINTS" id="PR00277">
    <property type="entry name" value="INSULIN"/>
</dbReference>
<dbReference type="PRINTS" id="PR00276">
    <property type="entry name" value="INSULINFAMLY"/>
</dbReference>
<dbReference type="SMART" id="SM00078">
    <property type="entry name" value="IlGF"/>
    <property type="match status" value="1"/>
</dbReference>
<dbReference type="SUPFAM" id="SSF56994">
    <property type="entry name" value="Insulin-like"/>
    <property type="match status" value="1"/>
</dbReference>
<dbReference type="PROSITE" id="PS00262">
    <property type="entry name" value="INSULIN"/>
    <property type="match status" value="1"/>
</dbReference>